<reference key="1">
    <citation type="journal article" date="2003" name="Nat. Genet.">
        <title>Comparative analysis of the genome sequences of Bordetella pertussis, Bordetella parapertussis and Bordetella bronchiseptica.</title>
        <authorList>
            <person name="Parkhill J."/>
            <person name="Sebaihia M."/>
            <person name="Preston A."/>
            <person name="Murphy L.D."/>
            <person name="Thomson N.R."/>
            <person name="Harris D.E."/>
            <person name="Holden M.T.G."/>
            <person name="Churcher C.M."/>
            <person name="Bentley S.D."/>
            <person name="Mungall K.L."/>
            <person name="Cerdeno-Tarraga A.-M."/>
            <person name="Temple L."/>
            <person name="James K.D."/>
            <person name="Harris B."/>
            <person name="Quail M.A."/>
            <person name="Achtman M."/>
            <person name="Atkin R."/>
            <person name="Baker S."/>
            <person name="Basham D."/>
            <person name="Bason N."/>
            <person name="Cherevach I."/>
            <person name="Chillingworth T."/>
            <person name="Collins M."/>
            <person name="Cronin A."/>
            <person name="Davis P."/>
            <person name="Doggett J."/>
            <person name="Feltwell T."/>
            <person name="Goble A."/>
            <person name="Hamlin N."/>
            <person name="Hauser H."/>
            <person name="Holroyd S."/>
            <person name="Jagels K."/>
            <person name="Leather S."/>
            <person name="Moule S."/>
            <person name="Norberczak H."/>
            <person name="O'Neil S."/>
            <person name="Ormond D."/>
            <person name="Price C."/>
            <person name="Rabbinowitsch E."/>
            <person name="Rutter S."/>
            <person name="Sanders M."/>
            <person name="Saunders D."/>
            <person name="Seeger K."/>
            <person name="Sharp S."/>
            <person name="Simmonds M."/>
            <person name="Skelton J."/>
            <person name="Squares R."/>
            <person name="Squares S."/>
            <person name="Stevens K."/>
            <person name="Unwin L."/>
            <person name="Whitehead S."/>
            <person name="Barrell B.G."/>
            <person name="Maskell D.J."/>
        </authorList>
    </citation>
    <scope>NUCLEOTIDE SEQUENCE [LARGE SCALE GENOMIC DNA]</scope>
    <source>
        <strain>ATCC BAA-588 / NCTC 13252 / RB50</strain>
    </source>
</reference>
<keyword id="KW-0030">Aminoacyl-tRNA synthetase</keyword>
<keyword id="KW-0067">ATP-binding</keyword>
<keyword id="KW-0963">Cytoplasm</keyword>
<keyword id="KW-0436">Ligase</keyword>
<keyword id="KW-0479">Metal-binding</keyword>
<keyword id="KW-0547">Nucleotide-binding</keyword>
<keyword id="KW-0648">Protein biosynthesis</keyword>
<keyword id="KW-0694">RNA-binding</keyword>
<keyword id="KW-0820">tRNA-binding</keyword>
<keyword id="KW-0862">Zinc</keyword>
<proteinExistence type="inferred from homology"/>
<protein>
    <recommendedName>
        <fullName evidence="1">Threonine--tRNA ligase</fullName>
        <ecNumber evidence="1">6.1.1.3</ecNumber>
    </recommendedName>
    <alternativeName>
        <fullName evidence="1">Threonyl-tRNA synthetase</fullName>
        <shortName evidence="1">ThrRS</shortName>
    </alternativeName>
</protein>
<gene>
    <name evidence="1" type="primary">thrS</name>
    <name type="ordered locus">BB2150</name>
</gene>
<name>SYT_BORBR</name>
<organism>
    <name type="scientific">Bordetella bronchiseptica (strain ATCC BAA-588 / NCTC 13252 / RB50)</name>
    <name type="common">Alcaligenes bronchisepticus</name>
    <dbReference type="NCBI Taxonomy" id="257310"/>
    <lineage>
        <taxon>Bacteria</taxon>
        <taxon>Pseudomonadati</taxon>
        <taxon>Pseudomonadota</taxon>
        <taxon>Betaproteobacteria</taxon>
        <taxon>Burkholderiales</taxon>
        <taxon>Alcaligenaceae</taxon>
        <taxon>Bordetella</taxon>
    </lineage>
</organism>
<dbReference type="EC" id="6.1.1.3" evidence="1"/>
<dbReference type="EMBL" id="BX640443">
    <property type="protein sequence ID" value="CAE32646.1"/>
    <property type="molecule type" value="Genomic_DNA"/>
</dbReference>
<dbReference type="RefSeq" id="WP_003812608.1">
    <property type="nucleotide sequence ID" value="NC_002927.3"/>
</dbReference>
<dbReference type="SMR" id="Q7WKF7"/>
<dbReference type="GeneID" id="93203735"/>
<dbReference type="KEGG" id="bbr:BB2150"/>
<dbReference type="eggNOG" id="COG0441">
    <property type="taxonomic scope" value="Bacteria"/>
</dbReference>
<dbReference type="HOGENOM" id="CLU_008554_0_1_4"/>
<dbReference type="Proteomes" id="UP000001027">
    <property type="component" value="Chromosome"/>
</dbReference>
<dbReference type="GO" id="GO:0005829">
    <property type="term" value="C:cytosol"/>
    <property type="evidence" value="ECO:0007669"/>
    <property type="project" value="TreeGrafter"/>
</dbReference>
<dbReference type="GO" id="GO:0005524">
    <property type="term" value="F:ATP binding"/>
    <property type="evidence" value="ECO:0007669"/>
    <property type="project" value="UniProtKB-UniRule"/>
</dbReference>
<dbReference type="GO" id="GO:0046872">
    <property type="term" value="F:metal ion binding"/>
    <property type="evidence" value="ECO:0007669"/>
    <property type="project" value="UniProtKB-KW"/>
</dbReference>
<dbReference type="GO" id="GO:0004829">
    <property type="term" value="F:threonine-tRNA ligase activity"/>
    <property type="evidence" value="ECO:0007669"/>
    <property type="project" value="UniProtKB-UniRule"/>
</dbReference>
<dbReference type="GO" id="GO:0000049">
    <property type="term" value="F:tRNA binding"/>
    <property type="evidence" value="ECO:0007669"/>
    <property type="project" value="UniProtKB-KW"/>
</dbReference>
<dbReference type="GO" id="GO:0006435">
    <property type="term" value="P:threonyl-tRNA aminoacylation"/>
    <property type="evidence" value="ECO:0007669"/>
    <property type="project" value="UniProtKB-UniRule"/>
</dbReference>
<dbReference type="CDD" id="cd01667">
    <property type="entry name" value="TGS_ThrRS"/>
    <property type="match status" value="1"/>
</dbReference>
<dbReference type="CDD" id="cd00860">
    <property type="entry name" value="ThrRS_anticodon"/>
    <property type="match status" value="1"/>
</dbReference>
<dbReference type="CDD" id="cd00771">
    <property type="entry name" value="ThrRS_core"/>
    <property type="match status" value="1"/>
</dbReference>
<dbReference type="FunFam" id="3.10.20.30:FF:000005">
    <property type="entry name" value="Threonine--tRNA ligase"/>
    <property type="match status" value="1"/>
</dbReference>
<dbReference type="FunFam" id="3.30.54.20:FF:000002">
    <property type="entry name" value="Threonine--tRNA ligase"/>
    <property type="match status" value="1"/>
</dbReference>
<dbReference type="FunFam" id="3.30.930.10:FF:000002">
    <property type="entry name" value="Threonine--tRNA ligase"/>
    <property type="match status" value="1"/>
</dbReference>
<dbReference type="FunFam" id="3.40.50.800:FF:000001">
    <property type="entry name" value="Threonine--tRNA ligase"/>
    <property type="match status" value="1"/>
</dbReference>
<dbReference type="FunFam" id="3.30.980.10:FF:000005">
    <property type="entry name" value="Threonyl-tRNA synthetase, mitochondrial"/>
    <property type="match status" value="1"/>
</dbReference>
<dbReference type="Gene3D" id="3.10.20.30">
    <property type="match status" value="1"/>
</dbReference>
<dbReference type="Gene3D" id="3.30.54.20">
    <property type="match status" value="1"/>
</dbReference>
<dbReference type="Gene3D" id="3.40.50.800">
    <property type="entry name" value="Anticodon-binding domain"/>
    <property type="match status" value="1"/>
</dbReference>
<dbReference type="Gene3D" id="3.30.930.10">
    <property type="entry name" value="Bira Bifunctional Protein, Domain 2"/>
    <property type="match status" value="1"/>
</dbReference>
<dbReference type="Gene3D" id="3.30.980.10">
    <property type="entry name" value="Threonyl-trna Synthetase, Chain A, domain 2"/>
    <property type="match status" value="1"/>
</dbReference>
<dbReference type="HAMAP" id="MF_00184">
    <property type="entry name" value="Thr_tRNA_synth"/>
    <property type="match status" value="1"/>
</dbReference>
<dbReference type="InterPro" id="IPR002314">
    <property type="entry name" value="aa-tRNA-synt_IIb"/>
</dbReference>
<dbReference type="InterPro" id="IPR006195">
    <property type="entry name" value="aa-tRNA-synth_II"/>
</dbReference>
<dbReference type="InterPro" id="IPR045864">
    <property type="entry name" value="aa-tRNA-synth_II/BPL/LPL"/>
</dbReference>
<dbReference type="InterPro" id="IPR004154">
    <property type="entry name" value="Anticodon-bd"/>
</dbReference>
<dbReference type="InterPro" id="IPR036621">
    <property type="entry name" value="Anticodon-bd_dom_sf"/>
</dbReference>
<dbReference type="InterPro" id="IPR012675">
    <property type="entry name" value="Beta-grasp_dom_sf"/>
</dbReference>
<dbReference type="InterPro" id="IPR004095">
    <property type="entry name" value="TGS"/>
</dbReference>
<dbReference type="InterPro" id="IPR012676">
    <property type="entry name" value="TGS-like"/>
</dbReference>
<dbReference type="InterPro" id="IPR002320">
    <property type="entry name" value="Thr-tRNA-ligase_IIa"/>
</dbReference>
<dbReference type="InterPro" id="IPR018163">
    <property type="entry name" value="Thr/Ala-tRNA-synth_IIc_edit"/>
</dbReference>
<dbReference type="InterPro" id="IPR047246">
    <property type="entry name" value="ThrRS_anticodon"/>
</dbReference>
<dbReference type="InterPro" id="IPR033728">
    <property type="entry name" value="ThrRS_core"/>
</dbReference>
<dbReference type="InterPro" id="IPR012947">
    <property type="entry name" value="tRNA_SAD"/>
</dbReference>
<dbReference type="NCBIfam" id="TIGR00418">
    <property type="entry name" value="thrS"/>
    <property type="match status" value="1"/>
</dbReference>
<dbReference type="PANTHER" id="PTHR11451:SF44">
    <property type="entry name" value="THREONINE--TRNA LIGASE, CHLOROPLASTIC_MITOCHONDRIAL 2"/>
    <property type="match status" value="1"/>
</dbReference>
<dbReference type="PANTHER" id="PTHR11451">
    <property type="entry name" value="THREONINE-TRNA LIGASE"/>
    <property type="match status" value="1"/>
</dbReference>
<dbReference type="Pfam" id="PF03129">
    <property type="entry name" value="HGTP_anticodon"/>
    <property type="match status" value="1"/>
</dbReference>
<dbReference type="Pfam" id="PF02824">
    <property type="entry name" value="TGS"/>
    <property type="match status" value="1"/>
</dbReference>
<dbReference type="Pfam" id="PF00587">
    <property type="entry name" value="tRNA-synt_2b"/>
    <property type="match status" value="1"/>
</dbReference>
<dbReference type="Pfam" id="PF07973">
    <property type="entry name" value="tRNA_SAD"/>
    <property type="match status" value="1"/>
</dbReference>
<dbReference type="PRINTS" id="PR01047">
    <property type="entry name" value="TRNASYNTHTHR"/>
</dbReference>
<dbReference type="SMART" id="SM00863">
    <property type="entry name" value="tRNA_SAD"/>
    <property type="match status" value="1"/>
</dbReference>
<dbReference type="SUPFAM" id="SSF52954">
    <property type="entry name" value="Class II aaRS ABD-related"/>
    <property type="match status" value="1"/>
</dbReference>
<dbReference type="SUPFAM" id="SSF55681">
    <property type="entry name" value="Class II aaRS and biotin synthetases"/>
    <property type="match status" value="1"/>
</dbReference>
<dbReference type="SUPFAM" id="SSF81271">
    <property type="entry name" value="TGS-like"/>
    <property type="match status" value="1"/>
</dbReference>
<dbReference type="SUPFAM" id="SSF55186">
    <property type="entry name" value="ThrRS/AlaRS common domain"/>
    <property type="match status" value="1"/>
</dbReference>
<dbReference type="PROSITE" id="PS50862">
    <property type="entry name" value="AA_TRNA_LIGASE_II"/>
    <property type="match status" value="1"/>
</dbReference>
<dbReference type="PROSITE" id="PS51880">
    <property type="entry name" value="TGS"/>
    <property type="match status" value="1"/>
</dbReference>
<comment type="function">
    <text evidence="1">Catalyzes the attachment of threonine to tRNA(Thr) in a two-step reaction: L-threonine is first activated by ATP to form Thr-AMP and then transferred to the acceptor end of tRNA(Thr). Also edits incorrectly charged L-seryl-tRNA(Thr).</text>
</comment>
<comment type="catalytic activity">
    <reaction evidence="1">
        <text>tRNA(Thr) + L-threonine + ATP = L-threonyl-tRNA(Thr) + AMP + diphosphate + H(+)</text>
        <dbReference type="Rhea" id="RHEA:24624"/>
        <dbReference type="Rhea" id="RHEA-COMP:9670"/>
        <dbReference type="Rhea" id="RHEA-COMP:9704"/>
        <dbReference type="ChEBI" id="CHEBI:15378"/>
        <dbReference type="ChEBI" id="CHEBI:30616"/>
        <dbReference type="ChEBI" id="CHEBI:33019"/>
        <dbReference type="ChEBI" id="CHEBI:57926"/>
        <dbReference type="ChEBI" id="CHEBI:78442"/>
        <dbReference type="ChEBI" id="CHEBI:78534"/>
        <dbReference type="ChEBI" id="CHEBI:456215"/>
        <dbReference type="EC" id="6.1.1.3"/>
    </reaction>
</comment>
<comment type="cofactor">
    <cofactor evidence="1">
        <name>Zn(2+)</name>
        <dbReference type="ChEBI" id="CHEBI:29105"/>
    </cofactor>
    <text evidence="1">Binds 1 zinc ion per subunit.</text>
</comment>
<comment type="subunit">
    <text evidence="1">Homodimer.</text>
</comment>
<comment type="subcellular location">
    <subcellularLocation>
        <location evidence="1">Cytoplasm</location>
    </subcellularLocation>
</comment>
<comment type="similarity">
    <text evidence="1">Belongs to the class-II aminoacyl-tRNA synthetase family.</text>
</comment>
<sequence>MVQITLPDGSQRQYPGPVTVAEVAQSIGAGLAKAALAGRVAFDGAEPRLVDTSFRIDNDAQLAIVTAKDADGLDLIRHSTAHLLAYAVKSLFPDAQVTIGPVIDNGFYYDFSYKRPFTPEDLQAIEKKMAELARKDEVVTREEWSRDEAVAYFKGIGEVYKAEIIASIPSNETLSLYREGDFIDLCRGPHVPSTGKLKVFKLMKVAGAYWRGDSKNEMLQRIYGTAWASKDDQDAYLHMLEEAERRDHRKIGRELDLFHFQDEAPGLIFWHPKGWALWQQVEQYMRKVYQDNGYQEVKAPQILDLTLWKKTGHWDNYRENMFTTESENRVYGLKPMNCPGHVQIFNAGLHSYRELPLRYGEFGQCHRNEPSGSLHGMMRVRGFTQDDGHIFCTEDQLQDECAAFTALLQKVYKDFGFTEVLYKVATRPEKRIGSDEIWDKAETALMESLRRTGCEFEISPGEGAFYGPKVEYTLKDAIGRHWQCGTIQVDFSMPVRLGAEYVDQNDQRRPPVMLHRAILGSLERFIGMLIENHAGAMPPWLAPLQAVVCCISEHSAEYAAQITQSLKKQGFRVQADLRGEKITRKIREHSLQKIPYLLVVGDKEMQNGTVAVRGLGGLDLGVIALDDFIARLAEDISTRRNVTQLASAA</sequence>
<evidence type="ECO:0000255" key="1">
    <source>
        <dbReference type="HAMAP-Rule" id="MF_00184"/>
    </source>
</evidence>
<evidence type="ECO:0000255" key="2">
    <source>
        <dbReference type="PROSITE-ProRule" id="PRU01228"/>
    </source>
</evidence>
<feature type="chain" id="PRO_1000020347" description="Threonine--tRNA ligase">
    <location>
        <begin position="1"/>
        <end position="649"/>
    </location>
</feature>
<feature type="domain" description="TGS" evidence="2">
    <location>
        <begin position="1"/>
        <end position="66"/>
    </location>
</feature>
<feature type="region of interest" description="Catalytic" evidence="1">
    <location>
        <begin position="247"/>
        <end position="538"/>
    </location>
</feature>
<feature type="binding site" evidence="1">
    <location>
        <position position="338"/>
    </location>
    <ligand>
        <name>Zn(2+)</name>
        <dbReference type="ChEBI" id="CHEBI:29105"/>
    </ligand>
</feature>
<feature type="binding site" evidence="1">
    <location>
        <position position="389"/>
    </location>
    <ligand>
        <name>Zn(2+)</name>
        <dbReference type="ChEBI" id="CHEBI:29105"/>
    </ligand>
</feature>
<feature type="binding site" evidence="1">
    <location>
        <position position="515"/>
    </location>
    <ligand>
        <name>Zn(2+)</name>
        <dbReference type="ChEBI" id="CHEBI:29105"/>
    </ligand>
</feature>
<accession>Q7WKF7</accession>